<organism>
    <name type="scientific">Sus scrofa</name>
    <name type="common">Pig</name>
    <dbReference type="NCBI Taxonomy" id="9823"/>
    <lineage>
        <taxon>Eukaryota</taxon>
        <taxon>Metazoa</taxon>
        <taxon>Chordata</taxon>
        <taxon>Craniata</taxon>
        <taxon>Vertebrata</taxon>
        <taxon>Euteleostomi</taxon>
        <taxon>Mammalia</taxon>
        <taxon>Eutheria</taxon>
        <taxon>Laurasiatheria</taxon>
        <taxon>Artiodactyla</taxon>
        <taxon>Suina</taxon>
        <taxon>Suidae</taxon>
        <taxon>Sus</taxon>
    </lineage>
</organism>
<dbReference type="EMBL" id="AF274305">
    <property type="protein sequence ID" value="AAF77065.1"/>
    <property type="molecule type" value="mRNA"/>
</dbReference>
<dbReference type="RefSeq" id="NP_999457.1">
    <property type="nucleotide sequence ID" value="NM_214292.1"/>
</dbReference>
<dbReference type="SMR" id="Q9MYZ9"/>
<dbReference type="FunCoup" id="Q9MYZ9">
    <property type="interactions" value="260"/>
</dbReference>
<dbReference type="STRING" id="9823.ENSSSCP00000014472"/>
<dbReference type="GlyCosmos" id="Q9MYZ9">
    <property type="glycosylation" value="1 site, No reported glycans"/>
</dbReference>
<dbReference type="GlyGen" id="Q9MYZ9">
    <property type="glycosylation" value="2 sites"/>
</dbReference>
<dbReference type="PaxDb" id="9823-ENSSSCP00000014472"/>
<dbReference type="Ensembl" id="ENSSSCT00000014873.5">
    <property type="protein sequence ID" value="ENSSSCP00000014472.2"/>
    <property type="gene ID" value="ENSSSCG00000013618.5"/>
</dbReference>
<dbReference type="Ensembl" id="ENSSSCT00015108584.1">
    <property type="protein sequence ID" value="ENSSSCP00015046071.1"/>
    <property type="gene ID" value="ENSSSCG00015079906.1"/>
</dbReference>
<dbReference type="Ensembl" id="ENSSSCT00025028183.1">
    <property type="protein sequence ID" value="ENSSSCP00025011922.1"/>
    <property type="gene ID" value="ENSSSCG00025020746.1"/>
</dbReference>
<dbReference type="Ensembl" id="ENSSSCT00065073601.1">
    <property type="protein sequence ID" value="ENSSSCP00065032041.1"/>
    <property type="gene ID" value="ENSSSCG00065053747.1"/>
</dbReference>
<dbReference type="Ensembl" id="ENSSSCT00070049940.1">
    <property type="protein sequence ID" value="ENSSSCP00070042181.1"/>
    <property type="gene ID" value="ENSSSCG00070024992.1"/>
</dbReference>
<dbReference type="Ensembl" id="ENSSSCT00105077498">
    <property type="protein sequence ID" value="ENSSSCP00105054821"/>
    <property type="gene ID" value="ENSSSCG00105040668"/>
</dbReference>
<dbReference type="Ensembl" id="ENSSSCT00110050603">
    <property type="protein sequence ID" value="ENSSSCP00110035465"/>
    <property type="gene ID" value="ENSSSCG00110026319"/>
</dbReference>
<dbReference type="Ensembl" id="ENSSSCT00115027701">
    <property type="protein sequence ID" value="ENSSSCP00115026261"/>
    <property type="gene ID" value="ENSSSCG00115015856"/>
</dbReference>
<dbReference type="Ensembl" id="ENSSSCT00130075057">
    <property type="protein sequence ID" value="ENSSSCP00130054022"/>
    <property type="gene ID" value="ENSSSCG00130038477"/>
</dbReference>
<dbReference type="GeneID" id="397554"/>
<dbReference type="KEGG" id="ssc:397554"/>
<dbReference type="CTD" id="2057"/>
<dbReference type="VGNC" id="VGNC:87746">
    <property type="gene designation" value="EPOR"/>
</dbReference>
<dbReference type="eggNOG" id="ENOG502RYHW">
    <property type="taxonomic scope" value="Eukaryota"/>
</dbReference>
<dbReference type="GeneTree" id="ENSGT00940000160315"/>
<dbReference type="HOGENOM" id="CLU_041434_0_0_1"/>
<dbReference type="InParanoid" id="Q9MYZ9"/>
<dbReference type="OMA" id="ERCWGTM"/>
<dbReference type="OrthoDB" id="9890439at2759"/>
<dbReference type="TreeFam" id="TF336573"/>
<dbReference type="Reactome" id="R-SSC-9006335">
    <property type="pathway name" value="Signaling by Erythropoietin"/>
</dbReference>
<dbReference type="Reactome" id="R-SSC-9027276">
    <property type="pathway name" value="Erythropoietin activates Phosphoinositide-3-kinase (PI3K)"/>
</dbReference>
<dbReference type="Reactome" id="R-SSC-9027284">
    <property type="pathway name" value="Erythropoietin activates RAS"/>
</dbReference>
<dbReference type="Proteomes" id="UP000008227">
    <property type="component" value="Chromosome 2"/>
</dbReference>
<dbReference type="Proteomes" id="UP000314985">
    <property type="component" value="Chromosome 2"/>
</dbReference>
<dbReference type="Proteomes" id="UP000694570">
    <property type="component" value="Unplaced"/>
</dbReference>
<dbReference type="Proteomes" id="UP000694571">
    <property type="component" value="Unplaced"/>
</dbReference>
<dbReference type="Proteomes" id="UP000694720">
    <property type="component" value="Unplaced"/>
</dbReference>
<dbReference type="Proteomes" id="UP000694722">
    <property type="component" value="Unplaced"/>
</dbReference>
<dbReference type="Proteomes" id="UP000694723">
    <property type="component" value="Unplaced"/>
</dbReference>
<dbReference type="Proteomes" id="UP000694724">
    <property type="component" value="Unplaced"/>
</dbReference>
<dbReference type="Proteomes" id="UP000694725">
    <property type="component" value="Unplaced"/>
</dbReference>
<dbReference type="Proteomes" id="UP000694726">
    <property type="component" value="Unplaced"/>
</dbReference>
<dbReference type="Proteomes" id="UP000694727">
    <property type="component" value="Unplaced"/>
</dbReference>
<dbReference type="Proteomes" id="UP000694728">
    <property type="component" value="Unplaced"/>
</dbReference>
<dbReference type="Bgee" id="ENSSSCG00000013618">
    <property type="expression patterns" value="Expressed in endocardial endothelium and 24 other cell types or tissues"/>
</dbReference>
<dbReference type="ExpressionAtlas" id="Q9MYZ9">
    <property type="expression patterns" value="baseline"/>
</dbReference>
<dbReference type="GO" id="GO:0009897">
    <property type="term" value="C:external side of plasma membrane"/>
    <property type="evidence" value="ECO:0000318"/>
    <property type="project" value="GO_Central"/>
</dbReference>
<dbReference type="GO" id="GO:0016607">
    <property type="term" value="C:nuclear speck"/>
    <property type="evidence" value="ECO:0007669"/>
    <property type="project" value="Ensembl"/>
</dbReference>
<dbReference type="GO" id="GO:0004900">
    <property type="term" value="F:erythropoietin receptor activity"/>
    <property type="evidence" value="ECO:0000250"/>
    <property type="project" value="UniProtKB"/>
</dbReference>
<dbReference type="GO" id="GO:0042802">
    <property type="term" value="F:identical protein binding"/>
    <property type="evidence" value="ECO:0007669"/>
    <property type="project" value="Ensembl"/>
</dbReference>
<dbReference type="GO" id="GO:0007420">
    <property type="term" value="P:brain development"/>
    <property type="evidence" value="ECO:0007669"/>
    <property type="project" value="Ensembl"/>
</dbReference>
<dbReference type="GO" id="GO:0019221">
    <property type="term" value="P:cytokine-mediated signaling pathway"/>
    <property type="evidence" value="ECO:0000318"/>
    <property type="project" value="GO_Central"/>
</dbReference>
<dbReference type="GO" id="GO:0046697">
    <property type="term" value="P:decidualization"/>
    <property type="evidence" value="ECO:0007669"/>
    <property type="project" value="Ensembl"/>
</dbReference>
<dbReference type="GO" id="GO:0007507">
    <property type="term" value="P:heart development"/>
    <property type="evidence" value="ECO:0007669"/>
    <property type="project" value="Ensembl"/>
</dbReference>
<dbReference type="GO" id="GO:0008284">
    <property type="term" value="P:positive regulation of cell population proliferation"/>
    <property type="evidence" value="ECO:0000318"/>
    <property type="project" value="GO_Central"/>
</dbReference>
<dbReference type="CDD" id="cd00063">
    <property type="entry name" value="FN3"/>
    <property type="match status" value="1"/>
</dbReference>
<dbReference type="FunFam" id="2.60.40.10:FF:001041">
    <property type="entry name" value="Erythropoietin receptor"/>
    <property type="match status" value="1"/>
</dbReference>
<dbReference type="Gene3D" id="2.60.40.10">
    <property type="entry name" value="Immunoglobulins"/>
    <property type="match status" value="2"/>
</dbReference>
<dbReference type="InterPro" id="IPR009167">
    <property type="entry name" value="Erythropoietin_rcpt"/>
</dbReference>
<dbReference type="InterPro" id="IPR003961">
    <property type="entry name" value="FN3_dom"/>
</dbReference>
<dbReference type="InterPro" id="IPR036116">
    <property type="entry name" value="FN3_sf"/>
</dbReference>
<dbReference type="InterPro" id="IPR015152">
    <property type="entry name" value="Growth/epo_recpt_lig-bind"/>
</dbReference>
<dbReference type="InterPro" id="IPR013783">
    <property type="entry name" value="Ig-like_fold"/>
</dbReference>
<dbReference type="InterPro" id="IPR003528">
    <property type="entry name" value="Long_hematopoietin_rcpt_CS"/>
</dbReference>
<dbReference type="PANTHER" id="PTHR23037">
    <property type="entry name" value="CYTOKINE RECEPTOR"/>
    <property type="match status" value="1"/>
</dbReference>
<dbReference type="PANTHER" id="PTHR23037:SF28">
    <property type="entry name" value="ERYTHROPOIETIN RECEPTOR"/>
    <property type="match status" value="1"/>
</dbReference>
<dbReference type="Pfam" id="PF09067">
    <property type="entry name" value="EpoR_lig-bind"/>
    <property type="match status" value="1"/>
</dbReference>
<dbReference type="Pfam" id="PF00041">
    <property type="entry name" value="fn3"/>
    <property type="match status" value="1"/>
</dbReference>
<dbReference type="PIRSF" id="PIRSF001959">
    <property type="entry name" value="EPO_receptor"/>
    <property type="match status" value="1"/>
</dbReference>
<dbReference type="SMART" id="SM00060">
    <property type="entry name" value="FN3"/>
    <property type="match status" value="1"/>
</dbReference>
<dbReference type="SUPFAM" id="SSF49265">
    <property type="entry name" value="Fibronectin type III"/>
    <property type="match status" value="2"/>
</dbReference>
<dbReference type="PROSITE" id="PS50853">
    <property type="entry name" value="FN3"/>
    <property type="match status" value="1"/>
</dbReference>
<dbReference type="PROSITE" id="PS01352">
    <property type="entry name" value="HEMATOPO_REC_L_F1"/>
    <property type="match status" value="1"/>
</dbReference>
<accession>Q9MYZ9</accession>
<proteinExistence type="evidence at transcript level"/>
<protein>
    <recommendedName>
        <fullName evidence="8">Erythropoietin receptor</fullName>
        <shortName>EPO-R</shortName>
    </recommendedName>
</protein>
<reference key="1">
    <citation type="journal article" date="2000" name="Domest. Anim. Endocrinol.">
        <title>Porcine erythropoietin receptor: molecular cloning and expression in embryonic and fetal liver.</title>
        <authorList>
            <person name="Pearson P.L."/>
            <person name="Smith T.P.L."/>
            <person name="Sonstegard T.S."/>
            <person name="Klemcke H.G."/>
            <person name="Christenson R.K."/>
            <person name="Vallet J.L."/>
        </authorList>
    </citation>
    <scope>NUCLEOTIDE SEQUENCE [MRNA]</scope>
    <scope>DEVELOPMENTAL STAGE</scope>
    <source>
        <tissue>Liver</tissue>
    </source>
</reference>
<comment type="function">
    <text evidence="1 3">Receptor for erythropoietin, which mediates erythropoietin-induced erythroblast proliferation and differentiation (By similarity). Upon EPO stimulation, EPOR dimerizes triggering the JAK2/STAT5 signaling cascade (By similarity). In some cell types, can also activate STAT1 and STAT3 (By similarity). May also activate the LYN tyrosine kinase (By similarity).</text>
</comment>
<comment type="function">
    <text evidence="3">Isoform EPOR-T acts as a dominant-negative receptor of EPOR-mediated signaling.</text>
</comment>
<comment type="subunit">
    <text evidence="1 3">Forms homodimers on EPO stimulation. The tyrosine-phosphorylated form interacts with several SH2 domain-containing proteins including LYN, the adapter protein SH2B2, PTPN6, PTPN11, JAK2, PI3 kinases, STAT5A/B, SOCS3, CRKL (By similarity). Interacts with INPP5D/SHIP1 (By similarity). SH2B2 binding inhibits the JAK-STAT signaling. Interacts with RHEX; this interaction occurs in a erythropoietin (EPO)-dependent manner. Interacts with ATXN2L (By similarity).</text>
</comment>
<comment type="subcellular location">
    <subcellularLocation>
        <location evidence="1">Cell membrane</location>
        <topology evidence="4">Single-pass type I membrane protein</topology>
    </subcellularLocation>
</comment>
<comment type="developmental stage">
    <text evidence="7">Low expression at day 24 gestation in fetal liver. Expression increases dramatically thereafter to day 30. Levels then remain constant up to day 40.</text>
</comment>
<comment type="domain">
    <text evidence="3">The WSXWS motif appears to be necessary for proper protein folding and thereby efficient intracellular transport and cell-surface receptor binding.</text>
</comment>
<comment type="domain">
    <text evidence="2">The box 1 motif is required for JAK interaction and/or activation.</text>
</comment>
<comment type="domain">
    <text evidence="1">Contains 1 copy of a cytoplasmic motif that is referred to as the immunoreceptor tyrosine-based inhibitor motif (ITIM). This motif is involved in modulation of cellular responses. The phosphorylated ITIM motif can bind the SH2 domain of several SH2-containing phosphatases.</text>
</comment>
<comment type="PTM">
    <text evidence="1 3">On EPO stimulation, phosphorylated on C-terminal tyrosine residues by JAK2 (By similarity). The phosphotyrosine motifs are also recruitment sites for several SH2-containing proteins and adapter proteins which mediate cell proliferation (By similarity). Phosphorylation on Tyr-455 is required for PTPN6 interaction, Tyr-427 for PTPN11 (By similarity). Tyr-427 is also required for SOCS3 binding, but Tyr-455/Tyr-457 motif is the preferred binding site (By similarity).</text>
</comment>
<comment type="PTM">
    <text evidence="1 3">Ubiquitinated by the ECS(SOCS2) complex following ligand-binding and phosphorylation by JAK2, leading to its degradation by the proteasome (By similarity). Regulation by the ECS(SOCS2) complex acts as a negative feedback loop of erythropoietin-mediated signaling pathway (By similarity). Ubiquitination at Lys-282 mediates receptor internalization, whereas ubiquitination at Lys-454 promotes trafficking of activated receptors to the lysosomes for degradation (By similarity). Ubiquitinated by NOSIP; appears to be either multi-monoubiquitinated or polyubiquitinated (By similarity). Ubiquitination mediates proliferation and survival of EPO-dependent cells (By similarity).</text>
</comment>
<comment type="similarity">
    <text evidence="9">Belongs to the type I cytokine receptor family. Type 1 subfamily.</text>
</comment>
<keyword id="KW-1003">Cell membrane</keyword>
<keyword id="KW-1015">Disulfide bond</keyword>
<keyword id="KW-0325">Glycoprotein</keyword>
<keyword id="KW-1017">Isopeptide bond</keyword>
<keyword id="KW-0472">Membrane</keyword>
<keyword id="KW-0597">Phosphoprotein</keyword>
<keyword id="KW-0675">Receptor</keyword>
<keyword id="KW-1185">Reference proteome</keyword>
<keyword id="KW-0732">Signal</keyword>
<keyword id="KW-0812">Transmembrane</keyword>
<keyword id="KW-1133">Transmembrane helix</keyword>
<keyword id="KW-0832">Ubl conjugation</keyword>
<sequence>MYHFGATLWPGVGSLCLLLAGATWAPSPNSPDAKFESKAALLAARGPEELLCFTERLEDLVCFWEEAGSAGVGPEDYSFSYQLEGEPWKPCHLHQGPTARGSVRFWCSLPTADTSSFVPLELRVTEVSSGAPRYHRIIHINEVVLLDPPAGLLARRAEESGHVVLRWLPPPGAPMASLIRYEVNISTENAAGGVQRVEILDGRTECVLSNLRGGTRYTFMVRARMAEPSFGGFWSAWSEPASLLTASDLDPLILTLSLILVLILLLLAVLALLSHRRTLKQKIWPGIPSPEGEFEGLFTTHKGNFQLWLYQTDGCLWWSPCTPFAEDPPAPLEVLSERCWGVTQAVEPAADDEGSLLEPVGSEHARDTYLVLDKWLLPRRPASEDLPQPGGDLDMAAMDEASEASFCSSALALKPGPEGASAASFEYTILDPSSQLLRPRALPAELPPTPPHLKYLYLVVSDSGISTDYSSGGSQETQGGSSSGPYSNPYENSLVPAPEPSPPNYVTCS</sequence>
<name>EPOR_PIG</name>
<feature type="signal peptide" evidence="4">
    <location>
        <begin position="1"/>
        <end position="24"/>
    </location>
</feature>
<feature type="chain" id="PRO_0000010870" description="Erythropoietin receptor">
    <location>
        <begin position="25"/>
        <end position="509"/>
    </location>
</feature>
<feature type="topological domain" description="Extracellular" evidence="4">
    <location>
        <begin position="25"/>
        <end position="251"/>
    </location>
</feature>
<feature type="transmembrane region" description="Helical" evidence="4">
    <location>
        <begin position="252"/>
        <end position="274"/>
    </location>
</feature>
<feature type="topological domain" description="Cytoplasmic" evidence="4">
    <location>
        <begin position="275"/>
        <end position="509"/>
    </location>
</feature>
<feature type="domain" description="Fibronectin type-III" evidence="5">
    <location>
        <begin position="148"/>
        <end position="248"/>
    </location>
</feature>
<feature type="region of interest" description="Disordered" evidence="6">
    <location>
        <begin position="467"/>
        <end position="509"/>
    </location>
</feature>
<feature type="short sequence motif" description="WSXWS motif" evidence="1">
    <location>
        <begin position="234"/>
        <end position="238"/>
    </location>
</feature>
<feature type="short sequence motif" description="Box 1 motif" evidence="2">
    <location>
        <begin position="283"/>
        <end position="291"/>
    </location>
</feature>
<feature type="short sequence motif" description="ITIM motif" evidence="1">
    <location>
        <begin position="453"/>
        <end position="458"/>
    </location>
</feature>
<feature type="compositionally biased region" description="Low complexity" evidence="6">
    <location>
        <begin position="470"/>
        <end position="493"/>
    </location>
</feature>
<feature type="site" description="Required for ligand binding" evidence="3">
    <location>
        <position position="117"/>
    </location>
</feature>
<feature type="modified residue" description="Phosphotyrosine; by JAK2" evidence="1">
    <location>
        <position position="369"/>
    </location>
</feature>
<feature type="modified residue" description="Phosphotyrosine; by JAK2" evidence="1">
    <location>
        <position position="427"/>
    </location>
</feature>
<feature type="modified residue" description="Phosphotyrosine; by JAK2" evidence="1">
    <location>
        <position position="455"/>
    </location>
</feature>
<feature type="modified residue" description="Phosphotyrosine; by JAK2" evidence="1">
    <location>
        <position position="457"/>
    </location>
</feature>
<feature type="modified residue" description="Phosphotyrosine; by JAK2" evidence="1">
    <location>
        <position position="469"/>
    </location>
</feature>
<feature type="modified residue" description="Phosphotyrosine; by JAK2" evidence="1">
    <location>
        <position position="486"/>
    </location>
</feature>
<feature type="modified residue" description="Phosphotyrosine; by JAK2" evidence="1">
    <location>
        <position position="490"/>
    </location>
</feature>
<feature type="modified residue" description="Phosphotyrosine; by JAK2" evidence="1">
    <location>
        <position position="505"/>
    </location>
</feature>
<feature type="glycosylation site" description="N-linked (GlcNAc...) asparagine" evidence="4">
    <location>
        <position position="184"/>
    </location>
</feature>
<feature type="disulfide bond" evidence="3">
    <location>
        <begin position="52"/>
        <end position="62"/>
    </location>
</feature>
<feature type="disulfide bond" evidence="3">
    <location>
        <begin position="91"/>
        <end position="107"/>
    </location>
</feature>
<feature type="cross-link" description="Glycyl lysine isopeptide (Lys-Gly) (interchain with G-Cter in ubiquitin)" evidence="1">
    <location>
        <position position="282"/>
    </location>
</feature>
<feature type="cross-link" description="Glycyl lysine isopeptide (Lys-Gly) (interchain with G-Cter in ubiquitin)" evidence="1">
    <location>
        <position position="454"/>
    </location>
</feature>
<gene>
    <name type="primary">EPOR</name>
</gene>
<evidence type="ECO:0000250" key="1">
    <source>
        <dbReference type="UniProtKB" id="P14753"/>
    </source>
</evidence>
<evidence type="ECO:0000250" key="2">
    <source>
        <dbReference type="UniProtKB" id="P16310"/>
    </source>
</evidence>
<evidence type="ECO:0000250" key="3">
    <source>
        <dbReference type="UniProtKB" id="P19235"/>
    </source>
</evidence>
<evidence type="ECO:0000255" key="4"/>
<evidence type="ECO:0000255" key="5">
    <source>
        <dbReference type="PROSITE-ProRule" id="PRU00316"/>
    </source>
</evidence>
<evidence type="ECO:0000256" key="6">
    <source>
        <dbReference type="SAM" id="MobiDB-lite"/>
    </source>
</evidence>
<evidence type="ECO:0000269" key="7">
    <source>
    </source>
</evidence>
<evidence type="ECO:0000303" key="8">
    <source>
    </source>
</evidence>
<evidence type="ECO:0000305" key="9"/>